<dbReference type="EC" id="2.5.1.78" evidence="1"/>
<dbReference type="EMBL" id="CP001100">
    <property type="protein sequence ID" value="ACF13275.1"/>
    <property type="molecule type" value="Genomic_DNA"/>
</dbReference>
<dbReference type="RefSeq" id="WP_012499359.1">
    <property type="nucleotide sequence ID" value="NC_011026.1"/>
</dbReference>
<dbReference type="SMR" id="B3QWR1"/>
<dbReference type="STRING" id="517418.Ctha_0807"/>
<dbReference type="KEGG" id="cts:Ctha_0807"/>
<dbReference type="eggNOG" id="COG0054">
    <property type="taxonomic scope" value="Bacteria"/>
</dbReference>
<dbReference type="HOGENOM" id="CLU_089358_1_1_10"/>
<dbReference type="OrthoDB" id="9809709at2"/>
<dbReference type="UniPathway" id="UPA00275">
    <property type="reaction ID" value="UER00404"/>
</dbReference>
<dbReference type="Proteomes" id="UP000001208">
    <property type="component" value="Chromosome"/>
</dbReference>
<dbReference type="GO" id="GO:0005829">
    <property type="term" value="C:cytosol"/>
    <property type="evidence" value="ECO:0007669"/>
    <property type="project" value="TreeGrafter"/>
</dbReference>
<dbReference type="GO" id="GO:0009349">
    <property type="term" value="C:riboflavin synthase complex"/>
    <property type="evidence" value="ECO:0007669"/>
    <property type="project" value="InterPro"/>
</dbReference>
<dbReference type="GO" id="GO:0000906">
    <property type="term" value="F:6,7-dimethyl-8-ribityllumazine synthase activity"/>
    <property type="evidence" value="ECO:0007669"/>
    <property type="project" value="UniProtKB-UniRule"/>
</dbReference>
<dbReference type="GO" id="GO:0009231">
    <property type="term" value="P:riboflavin biosynthetic process"/>
    <property type="evidence" value="ECO:0007669"/>
    <property type="project" value="UniProtKB-UniRule"/>
</dbReference>
<dbReference type="CDD" id="cd09209">
    <property type="entry name" value="Lumazine_synthase-I"/>
    <property type="match status" value="1"/>
</dbReference>
<dbReference type="FunFam" id="3.40.50.960:FF:000001">
    <property type="entry name" value="6,7-dimethyl-8-ribityllumazine synthase"/>
    <property type="match status" value="1"/>
</dbReference>
<dbReference type="Gene3D" id="3.40.50.960">
    <property type="entry name" value="Lumazine/riboflavin synthase"/>
    <property type="match status" value="1"/>
</dbReference>
<dbReference type="HAMAP" id="MF_00178">
    <property type="entry name" value="Lumazine_synth"/>
    <property type="match status" value="1"/>
</dbReference>
<dbReference type="InterPro" id="IPR034964">
    <property type="entry name" value="LS"/>
</dbReference>
<dbReference type="InterPro" id="IPR002180">
    <property type="entry name" value="LS/RS"/>
</dbReference>
<dbReference type="InterPro" id="IPR036467">
    <property type="entry name" value="LS/RS_sf"/>
</dbReference>
<dbReference type="NCBIfam" id="TIGR00114">
    <property type="entry name" value="lumazine-synth"/>
    <property type="match status" value="1"/>
</dbReference>
<dbReference type="NCBIfam" id="NF000812">
    <property type="entry name" value="PRK00061.1-4"/>
    <property type="match status" value="1"/>
</dbReference>
<dbReference type="PANTHER" id="PTHR21058:SF0">
    <property type="entry name" value="6,7-DIMETHYL-8-RIBITYLLUMAZINE SYNTHASE"/>
    <property type="match status" value="1"/>
</dbReference>
<dbReference type="PANTHER" id="PTHR21058">
    <property type="entry name" value="6,7-DIMETHYL-8-RIBITYLLUMAZINE SYNTHASE DMRL SYNTHASE LUMAZINE SYNTHASE"/>
    <property type="match status" value="1"/>
</dbReference>
<dbReference type="Pfam" id="PF00885">
    <property type="entry name" value="DMRL_synthase"/>
    <property type="match status" value="1"/>
</dbReference>
<dbReference type="SUPFAM" id="SSF52121">
    <property type="entry name" value="Lumazine synthase"/>
    <property type="match status" value="1"/>
</dbReference>
<comment type="function">
    <text evidence="1">Catalyzes the formation of 6,7-dimethyl-8-ribityllumazine by condensation of 5-amino-6-(D-ribitylamino)uracil with 3,4-dihydroxy-2-butanone 4-phosphate. This is the penultimate step in the biosynthesis of riboflavin.</text>
</comment>
<comment type="catalytic activity">
    <reaction evidence="1">
        <text>(2S)-2-hydroxy-3-oxobutyl phosphate + 5-amino-6-(D-ribitylamino)uracil = 6,7-dimethyl-8-(1-D-ribityl)lumazine + phosphate + 2 H2O + H(+)</text>
        <dbReference type="Rhea" id="RHEA:26152"/>
        <dbReference type="ChEBI" id="CHEBI:15377"/>
        <dbReference type="ChEBI" id="CHEBI:15378"/>
        <dbReference type="ChEBI" id="CHEBI:15934"/>
        <dbReference type="ChEBI" id="CHEBI:43474"/>
        <dbReference type="ChEBI" id="CHEBI:58201"/>
        <dbReference type="ChEBI" id="CHEBI:58830"/>
        <dbReference type="EC" id="2.5.1.78"/>
    </reaction>
</comment>
<comment type="pathway">
    <text evidence="1">Cofactor biosynthesis; riboflavin biosynthesis; riboflavin from 2-hydroxy-3-oxobutyl phosphate and 5-amino-6-(D-ribitylamino)uracil: step 1/2.</text>
</comment>
<comment type="similarity">
    <text evidence="1">Belongs to the DMRL synthase family.</text>
</comment>
<sequence>MNIKTIEGNLSAKDSKFAIVTSRFNDFIGGRLVEGALDCIVRHDGSEENIAIYKCPGAFEVPMVAKKLAQSGKWDAVIAIGVLIRGATAHFDYIAAEATKGIAQASLECGVPISFGVLTTDTIEQAIERAGTKAGNKGWDAASAAIEMVNLYKQM</sequence>
<feature type="chain" id="PRO_1000098174" description="6,7-dimethyl-8-ribityllumazine synthase">
    <location>
        <begin position="1"/>
        <end position="155"/>
    </location>
</feature>
<feature type="active site" description="Proton donor" evidence="1">
    <location>
        <position position="90"/>
    </location>
</feature>
<feature type="binding site" evidence="1">
    <location>
        <position position="24"/>
    </location>
    <ligand>
        <name>5-amino-6-(D-ribitylamino)uracil</name>
        <dbReference type="ChEBI" id="CHEBI:15934"/>
    </ligand>
</feature>
<feature type="binding site" evidence="1">
    <location>
        <begin position="58"/>
        <end position="60"/>
    </location>
    <ligand>
        <name>5-amino-6-(D-ribitylamino)uracil</name>
        <dbReference type="ChEBI" id="CHEBI:15934"/>
    </ligand>
</feature>
<feature type="binding site" evidence="1">
    <location>
        <begin position="82"/>
        <end position="84"/>
    </location>
    <ligand>
        <name>5-amino-6-(D-ribitylamino)uracil</name>
        <dbReference type="ChEBI" id="CHEBI:15934"/>
    </ligand>
</feature>
<feature type="binding site" evidence="1">
    <location>
        <begin position="87"/>
        <end position="88"/>
    </location>
    <ligand>
        <name>(2S)-2-hydroxy-3-oxobutyl phosphate</name>
        <dbReference type="ChEBI" id="CHEBI:58830"/>
    </ligand>
</feature>
<feature type="binding site" evidence="1">
    <location>
        <position position="115"/>
    </location>
    <ligand>
        <name>5-amino-6-(D-ribitylamino)uracil</name>
        <dbReference type="ChEBI" id="CHEBI:15934"/>
    </ligand>
</feature>
<feature type="binding site" evidence="1">
    <location>
        <position position="129"/>
    </location>
    <ligand>
        <name>(2S)-2-hydroxy-3-oxobutyl phosphate</name>
        <dbReference type="ChEBI" id="CHEBI:58830"/>
    </ligand>
</feature>
<proteinExistence type="inferred from homology"/>
<organism>
    <name type="scientific">Chloroherpeton thalassium (strain ATCC 35110 / GB-78)</name>
    <dbReference type="NCBI Taxonomy" id="517418"/>
    <lineage>
        <taxon>Bacteria</taxon>
        <taxon>Pseudomonadati</taxon>
        <taxon>Chlorobiota</taxon>
        <taxon>Chlorobiia</taxon>
        <taxon>Chlorobiales</taxon>
        <taxon>Chloroherpetonaceae</taxon>
        <taxon>Chloroherpeton</taxon>
    </lineage>
</organism>
<protein>
    <recommendedName>
        <fullName evidence="1">6,7-dimethyl-8-ribityllumazine synthase</fullName>
        <shortName evidence="1">DMRL synthase</shortName>
        <shortName evidence="1">LS</shortName>
        <shortName evidence="1">Lumazine synthase</shortName>
        <ecNumber evidence="1">2.5.1.78</ecNumber>
    </recommendedName>
</protein>
<name>RISB_CHLT3</name>
<keyword id="KW-1185">Reference proteome</keyword>
<keyword id="KW-0686">Riboflavin biosynthesis</keyword>
<keyword id="KW-0808">Transferase</keyword>
<accession>B3QWR1</accession>
<reference key="1">
    <citation type="submission" date="2008-06" db="EMBL/GenBank/DDBJ databases">
        <title>Complete sequence of Chloroherpeton thalassium ATCC 35110.</title>
        <authorList>
            <consortium name="US DOE Joint Genome Institute"/>
            <person name="Lucas S."/>
            <person name="Copeland A."/>
            <person name="Lapidus A."/>
            <person name="Glavina del Rio T."/>
            <person name="Dalin E."/>
            <person name="Tice H."/>
            <person name="Bruce D."/>
            <person name="Goodwin L."/>
            <person name="Pitluck S."/>
            <person name="Schmutz J."/>
            <person name="Larimer F."/>
            <person name="Land M."/>
            <person name="Hauser L."/>
            <person name="Kyrpides N."/>
            <person name="Mikhailova N."/>
            <person name="Liu Z."/>
            <person name="Li T."/>
            <person name="Zhao F."/>
            <person name="Overmann J."/>
            <person name="Bryant D.A."/>
            <person name="Richardson P."/>
        </authorList>
    </citation>
    <scope>NUCLEOTIDE SEQUENCE [LARGE SCALE GENOMIC DNA]</scope>
    <source>
        <strain>ATCC 35110 / GB-78</strain>
    </source>
</reference>
<gene>
    <name evidence="1" type="primary">ribH</name>
    <name type="ordered locus">Ctha_0807</name>
</gene>
<evidence type="ECO:0000255" key="1">
    <source>
        <dbReference type="HAMAP-Rule" id="MF_00178"/>
    </source>
</evidence>